<dbReference type="EC" id="3.6.5.3" evidence="2"/>
<dbReference type="EMBL" id="AE000520">
    <property type="protein sequence ID" value="AAC65172.1"/>
    <property type="status" value="ALT_INIT"/>
    <property type="molecule type" value="Genomic_DNA"/>
</dbReference>
<dbReference type="PIR" id="E71354">
    <property type="entry name" value="E71354"/>
</dbReference>
<dbReference type="RefSeq" id="WP_010881634.1">
    <property type="nucleotide sequence ID" value="NC_021490.2"/>
</dbReference>
<dbReference type="SMR" id="O83217"/>
<dbReference type="IntAct" id="O83217">
    <property type="interactions" value="2"/>
</dbReference>
<dbReference type="STRING" id="243276.TP_0187"/>
<dbReference type="EnsemblBacteria" id="AAC65172">
    <property type="protein sequence ID" value="AAC65172"/>
    <property type="gene ID" value="TP_0187"/>
</dbReference>
<dbReference type="GeneID" id="93875975"/>
<dbReference type="KEGG" id="tpa:TP_0187"/>
<dbReference type="eggNOG" id="COG0050">
    <property type="taxonomic scope" value="Bacteria"/>
</dbReference>
<dbReference type="HOGENOM" id="CLU_007265_0_1_12"/>
<dbReference type="OrthoDB" id="9804504at2"/>
<dbReference type="Proteomes" id="UP000000811">
    <property type="component" value="Chromosome"/>
</dbReference>
<dbReference type="GO" id="GO:0005829">
    <property type="term" value="C:cytosol"/>
    <property type="evidence" value="ECO:0007669"/>
    <property type="project" value="TreeGrafter"/>
</dbReference>
<dbReference type="GO" id="GO:0005525">
    <property type="term" value="F:GTP binding"/>
    <property type="evidence" value="ECO:0007669"/>
    <property type="project" value="UniProtKB-UniRule"/>
</dbReference>
<dbReference type="GO" id="GO:0003924">
    <property type="term" value="F:GTPase activity"/>
    <property type="evidence" value="ECO:0007669"/>
    <property type="project" value="InterPro"/>
</dbReference>
<dbReference type="GO" id="GO:0003746">
    <property type="term" value="F:translation elongation factor activity"/>
    <property type="evidence" value="ECO:0007669"/>
    <property type="project" value="UniProtKB-UniRule"/>
</dbReference>
<dbReference type="CDD" id="cd01884">
    <property type="entry name" value="EF_Tu"/>
    <property type="match status" value="1"/>
</dbReference>
<dbReference type="CDD" id="cd03697">
    <property type="entry name" value="EFTU_II"/>
    <property type="match status" value="1"/>
</dbReference>
<dbReference type="CDD" id="cd03707">
    <property type="entry name" value="EFTU_III"/>
    <property type="match status" value="1"/>
</dbReference>
<dbReference type="FunFam" id="2.40.30.10:FF:000001">
    <property type="entry name" value="Elongation factor Tu"/>
    <property type="match status" value="1"/>
</dbReference>
<dbReference type="FunFam" id="3.40.50.300:FF:000003">
    <property type="entry name" value="Elongation factor Tu"/>
    <property type="match status" value="1"/>
</dbReference>
<dbReference type="Gene3D" id="3.40.50.300">
    <property type="entry name" value="P-loop containing nucleotide triphosphate hydrolases"/>
    <property type="match status" value="1"/>
</dbReference>
<dbReference type="Gene3D" id="2.40.30.10">
    <property type="entry name" value="Translation factors"/>
    <property type="match status" value="2"/>
</dbReference>
<dbReference type="HAMAP" id="MF_00118_B">
    <property type="entry name" value="EF_Tu_B"/>
    <property type="match status" value="1"/>
</dbReference>
<dbReference type="InterPro" id="IPR041709">
    <property type="entry name" value="EF-Tu_GTP-bd"/>
</dbReference>
<dbReference type="InterPro" id="IPR050055">
    <property type="entry name" value="EF-Tu_GTPase"/>
</dbReference>
<dbReference type="InterPro" id="IPR004161">
    <property type="entry name" value="EFTu-like_2"/>
</dbReference>
<dbReference type="InterPro" id="IPR033720">
    <property type="entry name" value="EFTU_2"/>
</dbReference>
<dbReference type="InterPro" id="IPR031157">
    <property type="entry name" value="G_TR_CS"/>
</dbReference>
<dbReference type="InterPro" id="IPR027417">
    <property type="entry name" value="P-loop_NTPase"/>
</dbReference>
<dbReference type="InterPro" id="IPR005225">
    <property type="entry name" value="Small_GTP-bd"/>
</dbReference>
<dbReference type="InterPro" id="IPR000795">
    <property type="entry name" value="T_Tr_GTP-bd_dom"/>
</dbReference>
<dbReference type="InterPro" id="IPR009000">
    <property type="entry name" value="Transl_B-barrel_sf"/>
</dbReference>
<dbReference type="InterPro" id="IPR009001">
    <property type="entry name" value="Transl_elong_EF1A/Init_IF2_C"/>
</dbReference>
<dbReference type="InterPro" id="IPR004541">
    <property type="entry name" value="Transl_elong_EFTu/EF1A_bac/org"/>
</dbReference>
<dbReference type="InterPro" id="IPR004160">
    <property type="entry name" value="Transl_elong_EFTu/EF1A_C"/>
</dbReference>
<dbReference type="NCBIfam" id="TIGR00485">
    <property type="entry name" value="EF-Tu"/>
    <property type="match status" value="1"/>
</dbReference>
<dbReference type="NCBIfam" id="NF000766">
    <property type="entry name" value="PRK00049.1"/>
    <property type="match status" value="1"/>
</dbReference>
<dbReference type="NCBIfam" id="NF009372">
    <property type="entry name" value="PRK12735.1"/>
    <property type="match status" value="1"/>
</dbReference>
<dbReference type="NCBIfam" id="NF009373">
    <property type="entry name" value="PRK12736.1"/>
    <property type="match status" value="1"/>
</dbReference>
<dbReference type="NCBIfam" id="TIGR00231">
    <property type="entry name" value="small_GTP"/>
    <property type="match status" value="1"/>
</dbReference>
<dbReference type="PANTHER" id="PTHR43721:SF22">
    <property type="entry name" value="ELONGATION FACTOR TU, MITOCHONDRIAL"/>
    <property type="match status" value="1"/>
</dbReference>
<dbReference type="PANTHER" id="PTHR43721">
    <property type="entry name" value="ELONGATION FACTOR TU-RELATED"/>
    <property type="match status" value="1"/>
</dbReference>
<dbReference type="Pfam" id="PF00009">
    <property type="entry name" value="GTP_EFTU"/>
    <property type="match status" value="1"/>
</dbReference>
<dbReference type="Pfam" id="PF03144">
    <property type="entry name" value="GTP_EFTU_D2"/>
    <property type="match status" value="1"/>
</dbReference>
<dbReference type="Pfam" id="PF03143">
    <property type="entry name" value="GTP_EFTU_D3"/>
    <property type="match status" value="1"/>
</dbReference>
<dbReference type="PRINTS" id="PR00315">
    <property type="entry name" value="ELONGATNFCT"/>
</dbReference>
<dbReference type="SUPFAM" id="SSF50465">
    <property type="entry name" value="EF-Tu/eEF-1alpha/eIF2-gamma C-terminal domain"/>
    <property type="match status" value="1"/>
</dbReference>
<dbReference type="SUPFAM" id="SSF52540">
    <property type="entry name" value="P-loop containing nucleoside triphosphate hydrolases"/>
    <property type="match status" value="1"/>
</dbReference>
<dbReference type="SUPFAM" id="SSF50447">
    <property type="entry name" value="Translation proteins"/>
    <property type="match status" value="1"/>
</dbReference>
<dbReference type="PROSITE" id="PS00301">
    <property type="entry name" value="G_TR_1"/>
    <property type="match status" value="1"/>
</dbReference>
<dbReference type="PROSITE" id="PS51722">
    <property type="entry name" value="G_TR_2"/>
    <property type="match status" value="1"/>
</dbReference>
<proteinExistence type="inferred from homology"/>
<organism>
    <name type="scientific">Treponema pallidum (strain Nichols)</name>
    <dbReference type="NCBI Taxonomy" id="243276"/>
    <lineage>
        <taxon>Bacteria</taxon>
        <taxon>Pseudomonadati</taxon>
        <taxon>Spirochaetota</taxon>
        <taxon>Spirochaetia</taxon>
        <taxon>Spirochaetales</taxon>
        <taxon>Treponemataceae</taxon>
        <taxon>Treponema</taxon>
    </lineage>
</organism>
<keyword id="KW-0963">Cytoplasm</keyword>
<keyword id="KW-0251">Elongation factor</keyword>
<keyword id="KW-0342">GTP-binding</keyword>
<keyword id="KW-0378">Hydrolase</keyword>
<keyword id="KW-0460">Magnesium</keyword>
<keyword id="KW-0479">Metal-binding</keyword>
<keyword id="KW-0547">Nucleotide-binding</keyword>
<keyword id="KW-0648">Protein biosynthesis</keyword>
<keyword id="KW-1185">Reference proteome</keyword>
<reference key="1">
    <citation type="journal article" date="1998" name="Science">
        <title>Complete genome sequence of Treponema pallidum, the syphilis spirochete.</title>
        <authorList>
            <person name="Fraser C.M."/>
            <person name="Norris S.J."/>
            <person name="Weinstock G.M."/>
            <person name="White O."/>
            <person name="Sutton G.G."/>
            <person name="Dodson R.J."/>
            <person name="Gwinn M.L."/>
            <person name="Hickey E.K."/>
            <person name="Clayton R.A."/>
            <person name="Ketchum K.A."/>
            <person name="Sodergren E."/>
            <person name="Hardham J.M."/>
            <person name="McLeod M.P."/>
            <person name="Salzberg S.L."/>
            <person name="Peterson J.D."/>
            <person name="Khalak H.G."/>
            <person name="Richardson D.L."/>
            <person name="Howell J.K."/>
            <person name="Chidambaram M."/>
            <person name="Utterback T.R."/>
            <person name="McDonald L.A."/>
            <person name="Artiach P."/>
            <person name="Bowman C."/>
            <person name="Cotton M.D."/>
            <person name="Fujii C."/>
            <person name="Garland S.A."/>
            <person name="Hatch B."/>
            <person name="Horst K."/>
            <person name="Roberts K.M."/>
            <person name="Sandusky M."/>
            <person name="Weidman J.F."/>
            <person name="Smith H.O."/>
            <person name="Venter J.C."/>
        </authorList>
    </citation>
    <scope>NUCLEOTIDE SEQUENCE [LARGE SCALE GENOMIC DNA]</scope>
    <source>
        <strain>Nichols</strain>
    </source>
</reference>
<sequence>MAKEKFARTKVHMNVGTIGHVDHGKTTLSAAITSYCAKKFGDKQLKYDEIDNAPEEKARGITINTRHLEYQSDRRHYAHIDCPGHADYVKNMITGAAQMDGGILVVSAPDGVMPQTKEHLLLARQVGVPSIIVFLNKVDLVDDPELLELVEEEVRDALAGYGFSRETPIVKGSAFKALQDGASPEDAACIEELLAAMDSYFEDPVRDDARPFLLSIEDVYTISGRGTVVTGRIECGVISLNEEVEIVGIKPTKKTVVTGIEMFNKLLDQGIAGDNVGLLLRGVDKKEVERGQVLSKPGSIKPHTKFEAQIYVLSKEEGGRHSPFFQGYRPQFYFRTTDITGTISLPEGVDMVKPGDNTKIIGELIHPIAMDKGLKLAIREGGRTIASGQVTEILL</sequence>
<accession>O83217</accession>
<feature type="chain" id="PRO_0000091429" description="Elongation factor Tu">
    <location>
        <begin position="1"/>
        <end position="395"/>
    </location>
</feature>
<feature type="domain" description="tr-type G">
    <location>
        <begin position="10"/>
        <end position="205"/>
    </location>
</feature>
<feature type="region of interest" description="G1" evidence="1">
    <location>
        <begin position="19"/>
        <end position="26"/>
    </location>
</feature>
<feature type="region of interest" description="G2" evidence="1">
    <location>
        <begin position="60"/>
        <end position="64"/>
    </location>
</feature>
<feature type="region of interest" description="G3" evidence="1">
    <location>
        <begin position="81"/>
        <end position="84"/>
    </location>
</feature>
<feature type="region of interest" description="G4" evidence="1">
    <location>
        <begin position="136"/>
        <end position="139"/>
    </location>
</feature>
<feature type="region of interest" description="G5" evidence="1">
    <location>
        <begin position="173"/>
        <end position="175"/>
    </location>
</feature>
<feature type="binding site" evidence="2">
    <location>
        <begin position="19"/>
        <end position="26"/>
    </location>
    <ligand>
        <name>GTP</name>
        <dbReference type="ChEBI" id="CHEBI:37565"/>
    </ligand>
</feature>
<feature type="binding site" evidence="2">
    <location>
        <position position="26"/>
    </location>
    <ligand>
        <name>Mg(2+)</name>
        <dbReference type="ChEBI" id="CHEBI:18420"/>
    </ligand>
</feature>
<feature type="binding site" evidence="2">
    <location>
        <begin position="81"/>
        <end position="85"/>
    </location>
    <ligand>
        <name>GTP</name>
        <dbReference type="ChEBI" id="CHEBI:37565"/>
    </ligand>
</feature>
<feature type="binding site" evidence="2">
    <location>
        <begin position="136"/>
        <end position="139"/>
    </location>
    <ligand>
        <name>GTP</name>
        <dbReference type="ChEBI" id="CHEBI:37565"/>
    </ligand>
</feature>
<comment type="function">
    <text evidence="2">GTP hydrolase that promotes the GTP-dependent binding of aminoacyl-tRNA to the A-site of ribosomes during protein biosynthesis.</text>
</comment>
<comment type="catalytic activity">
    <reaction evidence="2">
        <text>GTP + H2O = GDP + phosphate + H(+)</text>
        <dbReference type="Rhea" id="RHEA:19669"/>
        <dbReference type="ChEBI" id="CHEBI:15377"/>
        <dbReference type="ChEBI" id="CHEBI:15378"/>
        <dbReference type="ChEBI" id="CHEBI:37565"/>
        <dbReference type="ChEBI" id="CHEBI:43474"/>
        <dbReference type="ChEBI" id="CHEBI:58189"/>
        <dbReference type="EC" id="3.6.5.3"/>
    </reaction>
    <physiologicalReaction direction="left-to-right" evidence="2">
        <dbReference type="Rhea" id="RHEA:19670"/>
    </physiologicalReaction>
</comment>
<comment type="subunit">
    <text evidence="2">Monomer.</text>
</comment>
<comment type="subcellular location">
    <subcellularLocation>
        <location evidence="2">Cytoplasm</location>
    </subcellularLocation>
</comment>
<comment type="similarity">
    <text evidence="2">Belongs to the TRAFAC class translation factor GTPase superfamily. Classic translation factor GTPase family. EF-Tu/EF-1A subfamily.</text>
</comment>
<comment type="sequence caution" evidence="3">
    <conflict type="erroneous initiation">
        <sequence resource="EMBL-CDS" id="AAC65172"/>
    </conflict>
</comment>
<evidence type="ECO:0000250" key="1"/>
<evidence type="ECO:0000255" key="2">
    <source>
        <dbReference type="HAMAP-Rule" id="MF_00118"/>
    </source>
</evidence>
<evidence type="ECO:0000305" key="3"/>
<name>EFTU_TREPA</name>
<protein>
    <recommendedName>
        <fullName evidence="2">Elongation factor Tu</fullName>
        <shortName evidence="2">EF-Tu</shortName>
        <ecNumber evidence="2">3.6.5.3</ecNumber>
    </recommendedName>
</protein>
<gene>
    <name evidence="2" type="primary">tuf</name>
    <name type="ordered locus">TP_0187</name>
</gene>